<protein>
    <recommendedName>
        <fullName evidence="1">Carboxy-S-adenosyl-L-methionine synthase</fullName>
        <shortName evidence="1">Cx-SAM synthase</shortName>
        <ecNumber evidence="1">2.1.3.-</ecNumber>
    </recommendedName>
</protein>
<comment type="function">
    <text evidence="1">Catalyzes the conversion of S-adenosyl-L-methionine (SAM) to carboxy-S-adenosyl-L-methionine (Cx-SAM).</text>
</comment>
<comment type="catalytic activity">
    <reaction evidence="1">
        <text>prephenate + S-adenosyl-L-methionine = carboxy-S-adenosyl-L-methionine + 3-phenylpyruvate + H2O</text>
        <dbReference type="Rhea" id="RHEA:51692"/>
        <dbReference type="ChEBI" id="CHEBI:15377"/>
        <dbReference type="ChEBI" id="CHEBI:18005"/>
        <dbReference type="ChEBI" id="CHEBI:29934"/>
        <dbReference type="ChEBI" id="CHEBI:59789"/>
        <dbReference type="ChEBI" id="CHEBI:134278"/>
    </reaction>
</comment>
<comment type="subunit">
    <text evidence="1">Homodimer.</text>
</comment>
<comment type="similarity">
    <text evidence="1">Belongs to the class I-like SAM-binding methyltransferase superfamily. Cx-SAM synthase family.</text>
</comment>
<name>CMOA_SALA4</name>
<organism>
    <name type="scientific">Salmonella agona (strain SL483)</name>
    <dbReference type="NCBI Taxonomy" id="454166"/>
    <lineage>
        <taxon>Bacteria</taxon>
        <taxon>Pseudomonadati</taxon>
        <taxon>Pseudomonadota</taxon>
        <taxon>Gammaproteobacteria</taxon>
        <taxon>Enterobacterales</taxon>
        <taxon>Enterobacteriaceae</taxon>
        <taxon>Salmonella</taxon>
    </lineage>
</organism>
<keyword id="KW-0949">S-adenosyl-L-methionine</keyword>
<keyword id="KW-0808">Transferase</keyword>
<proteinExistence type="inferred from homology"/>
<dbReference type="EC" id="2.1.3.-" evidence="1"/>
<dbReference type="EMBL" id="CP001138">
    <property type="protein sequence ID" value="ACH48860.1"/>
    <property type="molecule type" value="Genomic_DNA"/>
</dbReference>
<dbReference type="RefSeq" id="WP_000019609.1">
    <property type="nucleotide sequence ID" value="NC_011149.1"/>
</dbReference>
<dbReference type="SMR" id="B5F3I5"/>
<dbReference type="KEGG" id="sea:SeAg_B1218"/>
<dbReference type="HOGENOM" id="CLU_078475_0_0_6"/>
<dbReference type="Proteomes" id="UP000008819">
    <property type="component" value="Chromosome"/>
</dbReference>
<dbReference type="GO" id="GO:0016743">
    <property type="term" value="F:carboxyl- or carbamoyltransferase activity"/>
    <property type="evidence" value="ECO:0007669"/>
    <property type="project" value="UniProtKB-UniRule"/>
</dbReference>
<dbReference type="GO" id="GO:1904047">
    <property type="term" value="F:S-adenosyl-L-methionine binding"/>
    <property type="evidence" value="ECO:0007669"/>
    <property type="project" value="UniProtKB-UniRule"/>
</dbReference>
<dbReference type="GO" id="GO:0002098">
    <property type="term" value="P:tRNA wobble uridine modification"/>
    <property type="evidence" value="ECO:0007669"/>
    <property type="project" value="InterPro"/>
</dbReference>
<dbReference type="CDD" id="cd02440">
    <property type="entry name" value="AdoMet_MTases"/>
    <property type="match status" value="1"/>
</dbReference>
<dbReference type="FunFam" id="3.40.50.150:FF:000030">
    <property type="entry name" value="Carboxy-S-adenosyl-L-methionine synthase"/>
    <property type="match status" value="1"/>
</dbReference>
<dbReference type="Gene3D" id="3.40.50.150">
    <property type="entry name" value="Vaccinia Virus protein VP39"/>
    <property type="match status" value="1"/>
</dbReference>
<dbReference type="HAMAP" id="MF_01589">
    <property type="entry name" value="Cx_SAM_synthase"/>
    <property type="match status" value="1"/>
</dbReference>
<dbReference type="InterPro" id="IPR005271">
    <property type="entry name" value="CmoA"/>
</dbReference>
<dbReference type="InterPro" id="IPR041698">
    <property type="entry name" value="Methyltransf_25"/>
</dbReference>
<dbReference type="InterPro" id="IPR029063">
    <property type="entry name" value="SAM-dependent_MTases_sf"/>
</dbReference>
<dbReference type="NCBIfam" id="TIGR00740">
    <property type="entry name" value="carboxy-S-adenosyl-L-methionine synthase CmoA"/>
    <property type="match status" value="1"/>
</dbReference>
<dbReference type="NCBIfam" id="NF011995">
    <property type="entry name" value="PRK15451.1"/>
    <property type="match status" value="1"/>
</dbReference>
<dbReference type="PANTHER" id="PTHR43861:SF2">
    <property type="entry name" value="CARBOXY-S-ADENOSYL-L-METHIONINE SYNTHASE"/>
    <property type="match status" value="1"/>
</dbReference>
<dbReference type="PANTHER" id="PTHR43861">
    <property type="entry name" value="TRANS-ACONITATE 2-METHYLTRANSFERASE-RELATED"/>
    <property type="match status" value="1"/>
</dbReference>
<dbReference type="Pfam" id="PF13649">
    <property type="entry name" value="Methyltransf_25"/>
    <property type="match status" value="1"/>
</dbReference>
<dbReference type="PIRSF" id="PIRSF006325">
    <property type="entry name" value="MeTrfase_bac"/>
    <property type="match status" value="1"/>
</dbReference>
<dbReference type="SUPFAM" id="SSF53335">
    <property type="entry name" value="S-adenosyl-L-methionine-dependent methyltransferases"/>
    <property type="match status" value="1"/>
</dbReference>
<evidence type="ECO:0000255" key="1">
    <source>
        <dbReference type="HAMAP-Rule" id="MF_01589"/>
    </source>
</evidence>
<reference key="1">
    <citation type="journal article" date="2011" name="J. Bacteriol.">
        <title>Comparative genomics of 28 Salmonella enterica isolates: evidence for CRISPR-mediated adaptive sublineage evolution.</title>
        <authorList>
            <person name="Fricke W.F."/>
            <person name="Mammel M.K."/>
            <person name="McDermott P.F."/>
            <person name="Tartera C."/>
            <person name="White D.G."/>
            <person name="Leclerc J.E."/>
            <person name="Ravel J."/>
            <person name="Cebula T.A."/>
        </authorList>
    </citation>
    <scope>NUCLEOTIDE SEQUENCE [LARGE SCALE GENOMIC DNA]</scope>
    <source>
        <strain>SL483</strain>
    </source>
</reference>
<accession>B5F3I5</accession>
<gene>
    <name evidence="1" type="primary">cmoA</name>
    <name type="ordered locus">SeAg_B1218</name>
</gene>
<feature type="chain" id="PRO_1000201361" description="Carboxy-S-adenosyl-L-methionine synthase">
    <location>
        <begin position="1"/>
        <end position="247"/>
    </location>
</feature>
<feature type="binding site" evidence="1">
    <location>
        <position position="39"/>
    </location>
    <ligand>
        <name>S-adenosyl-L-methionine</name>
        <dbReference type="ChEBI" id="CHEBI:59789"/>
    </ligand>
</feature>
<feature type="binding site" evidence="1">
    <location>
        <begin position="64"/>
        <end position="66"/>
    </location>
    <ligand>
        <name>S-adenosyl-L-methionine</name>
        <dbReference type="ChEBI" id="CHEBI:59789"/>
    </ligand>
</feature>
<feature type="binding site" evidence="1">
    <location>
        <begin position="89"/>
        <end position="90"/>
    </location>
    <ligand>
        <name>S-adenosyl-L-methionine</name>
        <dbReference type="ChEBI" id="CHEBI:59789"/>
    </ligand>
</feature>
<feature type="binding site" evidence="1">
    <location>
        <begin position="117"/>
        <end position="118"/>
    </location>
    <ligand>
        <name>S-adenosyl-L-methionine</name>
        <dbReference type="ChEBI" id="CHEBI:59789"/>
    </ligand>
</feature>
<feature type="binding site" evidence="1">
    <location>
        <position position="132"/>
    </location>
    <ligand>
        <name>S-adenosyl-L-methionine</name>
        <dbReference type="ChEBI" id="CHEBI:59789"/>
    </ligand>
</feature>
<feature type="binding site" evidence="1">
    <location>
        <position position="199"/>
    </location>
    <ligand>
        <name>S-adenosyl-L-methionine</name>
        <dbReference type="ChEBI" id="CHEBI:59789"/>
    </ligand>
</feature>
<sequence length="247" mass="27848">MSHRDTLFSAPIARLGDWTFDERVAEVFPDMIQRSVPGYSNIISMIGMLAERFVQPNTQVYDLGCSLGAATLSVRRNIRHEHCRIIAVDNSPAMIERCRRHIDAYKAPTPVEVVEGDIRDITIENASMVVLNFTLQFLEPAERQALLDKIYLGLNPGGALVLSEKFSFEDAKVGELLFNMHHDFKRANGYSELEISQKRSMLENVMLTDSVETHKARLRQAGFEHSELWFQCFNFGSLVALKAGVAA</sequence>